<protein>
    <recommendedName>
        <fullName evidence="2">Protein translocase subunit SecY</fullName>
    </recommendedName>
</protein>
<accession>P16336</accession>
<dbReference type="EMBL" id="X51329">
    <property type="protein sequence ID" value="CAA35712.1"/>
    <property type="molecule type" value="Genomic_DNA"/>
</dbReference>
<dbReference type="EMBL" id="M31102">
    <property type="protein sequence ID" value="AAB59118.1"/>
    <property type="molecule type" value="Genomic_DNA"/>
</dbReference>
<dbReference type="EMBL" id="D00619">
    <property type="protein sequence ID" value="BAA00495.1"/>
    <property type="status" value="ALT_INIT"/>
    <property type="molecule type" value="Genomic_DNA"/>
</dbReference>
<dbReference type="EMBL" id="L47971">
    <property type="protein sequence ID" value="AAB06819.1"/>
    <property type="molecule type" value="Genomic_DNA"/>
</dbReference>
<dbReference type="EMBL" id="AL009126">
    <property type="protein sequence ID" value="CAB11912.1"/>
    <property type="molecule type" value="Genomic_DNA"/>
</dbReference>
<dbReference type="PIR" id="S08629">
    <property type="entry name" value="BWBSSY"/>
</dbReference>
<dbReference type="RefSeq" id="NP_388017.1">
    <property type="nucleotide sequence ID" value="NC_000964.3"/>
</dbReference>
<dbReference type="RefSeq" id="WP_004399662.1">
    <property type="nucleotide sequence ID" value="NZ_OZ025638.1"/>
</dbReference>
<dbReference type="SMR" id="P16336"/>
<dbReference type="FunCoup" id="P16336">
    <property type="interactions" value="684"/>
</dbReference>
<dbReference type="STRING" id="224308.BSU01360"/>
<dbReference type="TCDB" id="3.A.5.2.1">
    <property type="family name" value="the general secretory pathway (sec) family"/>
</dbReference>
<dbReference type="PaxDb" id="224308-BSU01360"/>
<dbReference type="EnsemblBacteria" id="CAB11912">
    <property type="protein sequence ID" value="CAB11912"/>
    <property type="gene ID" value="BSU_01360"/>
</dbReference>
<dbReference type="GeneID" id="936779"/>
<dbReference type="KEGG" id="bsu:BSU01360"/>
<dbReference type="PATRIC" id="fig|224308.179.peg.139"/>
<dbReference type="eggNOG" id="COG0201">
    <property type="taxonomic scope" value="Bacteria"/>
</dbReference>
<dbReference type="InParanoid" id="P16336"/>
<dbReference type="OrthoDB" id="9809248at2"/>
<dbReference type="PhylomeDB" id="P16336"/>
<dbReference type="BioCyc" id="BSUB:BSU01360-MONOMER"/>
<dbReference type="Proteomes" id="UP000001570">
    <property type="component" value="Chromosome"/>
</dbReference>
<dbReference type="GO" id="GO:0031522">
    <property type="term" value="C:cell envelope Sec protein transport complex"/>
    <property type="evidence" value="ECO:0000318"/>
    <property type="project" value="GO_Central"/>
</dbReference>
<dbReference type="GO" id="GO:0045121">
    <property type="term" value="C:membrane raft"/>
    <property type="evidence" value="ECO:0007669"/>
    <property type="project" value="UniProtKB-SubCell"/>
</dbReference>
<dbReference type="GO" id="GO:0005886">
    <property type="term" value="C:plasma membrane"/>
    <property type="evidence" value="ECO:0000318"/>
    <property type="project" value="GO_Central"/>
</dbReference>
<dbReference type="GO" id="GO:0008320">
    <property type="term" value="F:protein transmembrane transporter activity"/>
    <property type="evidence" value="ECO:0000318"/>
    <property type="project" value="GO_Central"/>
</dbReference>
<dbReference type="GO" id="GO:0005048">
    <property type="term" value="F:signal sequence binding"/>
    <property type="evidence" value="ECO:0000318"/>
    <property type="project" value="GO_Central"/>
</dbReference>
<dbReference type="GO" id="GO:0043952">
    <property type="term" value="P:protein transport by the Sec complex"/>
    <property type="evidence" value="ECO:0007669"/>
    <property type="project" value="UniProtKB-UniRule"/>
</dbReference>
<dbReference type="GO" id="GO:0006616">
    <property type="term" value="P:SRP-dependent cotranslational protein targeting to membrane, translocation"/>
    <property type="evidence" value="ECO:0000318"/>
    <property type="project" value="GO_Central"/>
</dbReference>
<dbReference type="FunFam" id="1.10.3370.10:FF:000001">
    <property type="entry name" value="Preprotein translocase subunit SecY"/>
    <property type="match status" value="1"/>
</dbReference>
<dbReference type="Gene3D" id="1.10.3370.10">
    <property type="entry name" value="SecY subunit domain"/>
    <property type="match status" value="1"/>
</dbReference>
<dbReference type="HAMAP" id="MF_01465">
    <property type="entry name" value="SecY"/>
    <property type="match status" value="1"/>
</dbReference>
<dbReference type="InterPro" id="IPR026593">
    <property type="entry name" value="SecY"/>
</dbReference>
<dbReference type="InterPro" id="IPR002208">
    <property type="entry name" value="SecY/SEC61-alpha"/>
</dbReference>
<dbReference type="InterPro" id="IPR030659">
    <property type="entry name" value="SecY_CS"/>
</dbReference>
<dbReference type="InterPro" id="IPR023201">
    <property type="entry name" value="SecY_dom_sf"/>
</dbReference>
<dbReference type="NCBIfam" id="TIGR00967">
    <property type="entry name" value="3a0501s007"/>
    <property type="match status" value="1"/>
</dbReference>
<dbReference type="PANTHER" id="PTHR10906">
    <property type="entry name" value="SECY/SEC61-ALPHA FAMILY MEMBER"/>
    <property type="match status" value="1"/>
</dbReference>
<dbReference type="Pfam" id="PF00344">
    <property type="entry name" value="SecY"/>
    <property type="match status" value="1"/>
</dbReference>
<dbReference type="PIRSF" id="PIRSF004557">
    <property type="entry name" value="SecY"/>
    <property type="match status" value="1"/>
</dbReference>
<dbReference type="PRINTS" id="PR00303">
    <property type="entry name" value="SECYTRNLCASE"/>
</dbReference>
<dbReference type="SUPFAM" id="SSF103491">
    <property type="entry name" value="Preprotein translocase SecY subunit"/>
    <property type="match status" value="1"/>
</dbReference>
<dbReference type="PROSITE" id="PS00755">
    <property type="entry name" value="SECY_1"/>
    <property type="match status" value="1"/>
</dbReference>
<dbReference type="PROSITE" id="PS00756">
    <property type="entry name" value="SECY_2"/>
    <property type="match status" value="1"/>
</dbReference>
<keyword id="KW-1003">Cell membrane</keyword>
<keyword id="KW-0472">Membrane</keyword>
<keyword id="KW-0653">Protein transport</keyword>
<keyword id="KW-1185">Reference proteome</keyword>
<keyword id="KW-0811">Translocation</keyword>
<keyword id="KW-0812">Transmembrane</keyword>
<keyword id="KW-1133">Transmembrane helix</keyword>
<keyword id="KW-0813">Transport</keyword>
<comment type="function">
    <text evidence="2">The central subunit of the protein translocation channel SecYEG. Consists of two halves formed by TMs 1-5 and 6-10. These two domains form a lateral gate at the front which open onto the bilayer between TMs 2 and 7, and are clamped together by SecE at the back. The channel is closed by both a pore ring composed of hydrophobic SecY resides and a short helix (helix 2A) on the extracellular side of the membrane which forms a plug. The plug probably moves laterally to allow the channel to open. The ring and the pore may move independently.</text>
</comment>
<comment type="subunit">
    <text evidence="2 3">Component of the Sec protein translocase complex. Heterotrimer consisting of SecY, SecE and SecG subunits. The heterotrimers can form oligomers, although 1 heterotrimer is thought to be able to translocate proteins. Interacts with the ribosome. Interacts with SecDF, and other proteins may be involved. Interacts with SecA (By similarity). Interacts with FloT (PubMed:23651456).</text>
</comment>
<comment type="subcellular location">
    <subcellularLocation>
        <location evidence="3">Cell membrane</location>
        <topology>Multi-pass membrane protein</topology>
    </subcellularLocation>
    <subcellularLocation>
        <location evidence="3">Membrane raft</location>
        <topology evidence="1">Multi-pass membrane protein</topology>
    </subcellularLocation>
    <text evidence="3">Present in detergent-resistant membrane (DRM) fractions that may be equivalent to eukaryotic membrane rafts; these rafts include proteins involved in signaling, molecule trafficking and protein secretion.</text>
</comment>
<comment type="similarity">
    <text evidence="2">Belongs to the SecY/SEC61-alpha family.</text>
</comment>
<comment type="sequence caution" evidence="4">
    <conflict type="erroneous initiation">
        <sequence resource="EMBL-CDS" id="BAA00495"/>
    </conflict>
    <text>Truncated N-terminus.</text>
</comment>
<reference key="1">
    <citation type="journal article" date="1990" name="Mol. Microbiol.">
        <title>Isolation of a secY homologue from Bacillus subtilis: evidence for a common protein export pathway in eubacteria.</title>
        <authorList>
            <person name="Suh J.-W."/>
            <person name="Boylan S.A."/>
            <person name="Thomas S.M."/>
            <person name="Dolan K.M."/>
            <person name="Oliver D.B."/>
            <person name="Price C.W."/>
        </authorList>
    </citation>
    <scope>NUCLEOTIDE SEQUENCE [GENOMIC DNA]</scope>
    <source>
        <strain>168</strain>
    </source>
</reference>
<reference key="2">
    <citation type="journal article" date="1990" name="Nucleic Acids Res.">
        <title>Sequence of the Bacillus subtilis spectinomycin resistance gene region.</title>
        <authorList>
            <person name="Yoshikawa H."/>
            <person name="Doi R.H."/>
        </authorList>
    </citation>
    <scope>NUCLEOTIDE SEQUENCE [GENOMIC DNA]</scope>
</reference>
<reference key="3">
    <citation type="journal article" date="1990" name="J. Biochem.">
        <title>Cloning and characterization of a Bacillus subtilis gene homologous to E. coli secY.</title>
        <authorList>
            <person name="Nakamura K."/>
            <person name="Nakamura A."/>
            <person name="Takamatsu H."/>
            <person name="Yoshikawa H."/>
            <person name="Yamane K."/>
        </authorList>
    </citation>
    <scope>NUCLEOTIDE SEQUENCE [GENOMIC DNA]</scope>
</reference>
<reference key="4">
    <citation type="journal article" date="1996" name="Gene">
        <title>Genetic and transcriptional organization of the Bacillus subtilis spc-alpha region.</title>
        <authorList>
            <person name="Suh J.-W."/>
            <person name="Boylan S.A."/>
            <person name="Oh S.H."/>
            <person name="Price C.W."/>
        </authorList>
    </citation>
    <scope>NUCLEOTIDE SEQUENCE [GENOMIC DNA]</scope>
</reference>
<reference key="5">
    <citation type="journal article" date="1997" name="Nature">
        <title>The complete genome sequence of the Gram-positive bacterium Bacillus subtilis.</title>
        <authorList>
            <person name="Kunst F."/>
            <person name="Ogasawara N."/>
            <person name="Moszer I."/>
            <person name="Albertini A.M."/>
            <person name="Alloni G."/>
            <person name="Azevedo V."/>
            <person name="Bertero M.G."/>
            <person name="Bessieres P."/>
            <person name="Bolotin A."/>
            <person name="Borchert S."/>
            <person name="Borriss R."/>
            <person name="Boursier L."/>
            <person name="Brans A."/>
            <person name="Braun M."/>
            <person name="Brignell S.C."/>
            <person name="Bron S."/>
            <person name="Brouillet S."/>
            <person name="Bruschi C.V."/>
            <person name="Caldwell B."/>
            <person name="Capuano V."/>
            <person name="Carter N.M."/>
            <person name="Choi S.-K."/>
            <person name="Codani J.-J."/>
            <person name="Connerton I.F."/>
            <person name="Cummings N.J."/>
            <person name="Daniel R.A."/>
            <person name="Denizot F."/>
            <person name="Devine K.M."/>
            <person name="Duesterhoeft A."/>
            <person name="Ehrlich S.D."/>
            <person name="Emmerson P.T."/>
            <person name="Entian K.-D."/>
            <person name="Errington J."/>
            <person name="Fabret C."/>
            <person name="Ferrari E."/>
            <person name="Foulger D."/>
            <person name="Fritz C."/>
            <person name="Fujita M."/>
            <person name="Fujita Y."/>
            <person name="Fuma S."/>
            <person name="Galizzi A."/>
            <person name="Galleron N."/>
            <person name="Ghim S.-Y."/>
            <person name="Glaser P."/>
            <person name="Goffeau A."/>
            <person name="Golightly E.J."/>
            <person name="Grandi G."/>
            <person name="Guiseppi G."/>
            <person name="Guy B.J."/>
            <person name="Haga K."/>
            <person name="Haiech J."/>
            <person name="Harwood C.R."/>
            <person name="Henaut A."/>
            <person name="Hilbert H."/>
            <person name="Holsappel S."/>
            <person name="Hosono S."/>
            <person name="Hullo M.-F."/>
            <person name="Itaya M."/>
            <person name="Jones L.-M."/>
            <person name="Joris B."/>
            <person name="Karamata D."/>
            <person name="Kasahara Y."/>
            <person name="Klaerr-Blanchard M."/>
            <person name="Klein C."/>
            <person name="Kobayashi Y."/>
            <person name="Koetter P."/>
            <person name="Koningstein G."/>
            <person name="Krogh S."/>
            <person name="Kumano M."/>
            <person name="Kurita K."/>
            <person name="Lapidus A."/>
            <person name="Lardinois S."/>
            <person name="Lauber J."/>
            <person name="Lazarevic V."/>
            <person name="Lee S.-M."/>
            <person name="Levine A."/>
            <person name="Liu H."/>
            <person name="Masuda S."/>
            <person name="Mauel C."/>
            <person name="Medigue C."/>
            <person name="Medina N."/>
            <person name="Mellado R.P."/>
            <person name="Mizuno M."/>
            <person name="Moestl D."/>
            <person name="Nakai S."/>
            <person name="Noback M."/>
            <person name="Noone D."/>
            <person name="O'Reilly M."/>
            <person name="Ogawa K."/>
            <person name="Ogiwara A."/>
            <person name="Oudega B."/>
            <person name="Park S.-H."/>
            <person name="Parro V."/>
            <person name="Pohl T.M."/>
            <person name="Portetelle D."/>
            <person name="Porwollik S."/>
            <person name="Prescott A.M."/>
            <person name="Presecan E."/>
            <person name="Pujic P."/>
            <person name="Purnelle B."/>
            <person name="Rapoport G."/>
            <person name="Rey M."/>
            <person name="Reynolds S."/>
            <person name="Rieger M."/>
            <person name="Rivolta C."/>
            <person name="Rocha E."/>
            <person name="Roche B."/>
            <person name="Rose M."/>
            <person name="Sadaie Y."/>
            <person name="Sato T."/>
            <person name="Scanlan E."/>
            <person name="Schleich S."/>
            <person name="Schroeter R."/>
            <person name="Scoffone F."/>
            <person name="Sekiguchi J."/>
            <person name="Sekowska A."/>
            <person name="Seror S.J."/>
            <person name="Serror P."/>
            <person name="Shin B.-S."/>
            <person name="Soldo B."/>
            <person name="Sorokin A."/>
            <person name="Tacconi E."/>
            <person name="Takagi T."/>
            <person name="Takahashi H."/>
            <person name="Takemaru K."/>
            <person name="Takeuchi M."/>
            <person name="Tamakoshi A."/>
            <person name="Tanaka T."/>
            <person name="Terpstra P."/>
            <person name="Tognoni A."/>
            <person name="Tosato V."/>
            <person name="Uchiyama S."/>
            <person name="Vandenbol M."/>
            <person name="Vannier F."/>
            <person name="Vassarotti A."/>
            <person name="Viari A."/>
            <person name="Wambutt R."/>
            <person name="Wedler E."/>
            <person name="Wedler H."/>
            <person name="Weitzenegger T."/>
            <person name="Winters P."/>
            <person name="Wipat A."/>
            <person name="Yamamoto H."/>
            <person name="Yamane K."/>
            <person name="Yasumoto K."/>
            <person name="Yata K."/>
            <person name="Yoshida K."/>
            <person name="Yoshikawa H.-F."/>
            <person name="Zumstein E."/>
            <person name="Yoshikawa H."/>
            <person name="Danchin A."/>
        </authorList>
    </citation>
    <scope>NUCLEOTIDE SEQUENCE [LARGE SCALE GENOMIC DNA]</scope>
    <source>
        <strain>168</strain>
    </source>
</reference>
<reference key="6">
    <citation type="journal article" date="2013" name="Mol. Microbiol.">
        <title>Flotillins functionally organize the bacterial membrane.</title>
        <authorList>
            <person name="Bach J.N."/>
            <person name="Bramkamp M."/>
        </authorList>
    </citation>
    <scope>INTERACTION WITH FLOT</scope>
    <scope>SUBCELLULAR LOCATION</scope>
    <source>
        <strain>168</strain>
    </source>
</reference>
<gene>
    <name evidence="2" type="primary">secY</name>
    <name type="ordered locus">BSU01360</name>
</gene>
<evidence type="ECO:0000255" key="1"/>
<evidence type="ECO:0000255" key="2">
    <source>
        <dbReference type="HAMAP-Rule" id="MF_01465"/>
    </source>
</evidence>
<evidence type="ECO:0000269" key="3">
    <source>
    </source>
</evidence>
<evidence type="ECO:0000305" key="4"/>
<name>SECY_BACSU</name>
<sequence length="431" mass="47243">MFKTISNFMRVSDIRNKIIFTLLMLIVFRIGAFIPVPYVNAEALQAQSQMGVFDLLNTFGGGALYQFSIFAMGITPYITASIIIQLLQMDVVPKFTEWSKQGEVGRRKLAQFTRYFTIVLGFIQALGMSYGFNNLANGMLIEKSGVSTYLIIALVLTGGTAFLMWLGEQITSHGVGNGISIIIFAGIVSSIPKTIGQIYETQFVGSNDQLFIHIVKVALLVIAILAVIVGVIFIQQAVRKIAIQYAKGTGRSPAGGGQSTHLPLKVNPAGVIPVIFAVAFLITPRTIASFFGTNDVTKWIQNNFDNTHPVGMAIYVALIIAFTYFYAFVQVNPEQMADNLKKQGGYIPGVRPGKMTQDRITSILYRLTFVGSIFLAVISILPIFFIQFAGLPQSAQIGGTSLLIVVGVALETMKQLESQLVKRNYRGFMKN</sequence>
<feature type="chain" id="PRO_0000131711" description="Protein translocase subunit SecY">
    <location>
        <begin position="1"/>
        <end position="431"/>
    </location>
</feature>
<feature type="topological domain" description="Cytoplasmic" evidence="1">
    <location>
        <begin position="1"/>
        <end position="17"/>
    </location>
</feature>
<feature type="transmembrane region" description="Helical" evidence="2">
    <location>
        <begin position="18"/>
        <end position="38"/>
    </location>
</feature>
<feature type="topological domain" description="Extracellular" evidence="1">
    <location>
        <begin position="39"/>
        <end position="66"/>
    </location>
</feature>
<feature type="transmembrane region" description="Helical" evidence="2">
    <location>
        <begin position="67"/>
        <end position="87"/>
    </location>
</feature>
<feature type="topological domain" description="Cytoplasmic" evidence="1">
    <location>
        <begin position="88"/>
        <end position="115"/>
    </location>
</feature>
<feature type="transmembrane region" description="Helical" evidence="2">
    <location>
        <begin position="116"/>
        <end position="136"/>
    </location>
</feature>
<feature type="topological domain" description="Extracellular" evidence="1">
    <location>
        <begin position="137"/>
        <end position="145"/>
    </location>
</feature>
<feature type="transmembrane region" description="Helical" evidence="2">
    <location>
        <begin position="146"/>
        <end position="166"/>
    </location>
</feature>
<feature type="topological domain" description="Cytoplasmic" evidence="1">
    <location>
        <begin position="167"/>
        <end position="177"/>
    </location>
</feature>
<feature type="transmembrane region" description="Helical" evidence="2">
    <location>
        <begin position="178"/>
        <end position="198"/>
    </location>
</feature>
<feature type="topological domain" description="Extracellular" evidence="1">
    <location>
        <begin position="199"/>
        <end position="213"/>
    </location>
</feature>
<feature type="transmembrane region" description="Helical" evidence="2">
    <location>
        <begin position="214"/>
        <end position="234"/>
    </location>
</feature>
<feature type="topological domain" description="Cytoplasmic" evidence="1">
    <location>
        <begin position="235"/>
        <end position="261"/>
    </location>
</feature>
<feature type="transmembrane region" description="Helical" evidence="2">
    <location>
        <begin position="262"/>
        <end position="282"/>
    </location>
</feature>
<feature type="topological domain" description="Extracellular" evidence="1">
    <location>
        <begin position="283"/>
        <end position="308"/>
    </location>
</feature>
<feature type="transmembrane region" description="Helical" evidence="2">
    <location>
        <begin position="309"/>
        <end position="329"/>
    </location>
</feature>
<feature type="topological domain" description="Cytoplasmic" evidence="1">
    <location>
        <begin position="330"/>
        <end position="368"/>
    </location>
</feature>
<feature type="transmembrane region" description="Helical" evidence="2">
    <location>
        <begin position="369"/>
        <end position="389"/>
    </location>
</feature>
<feature type="transmembrane region" description="Helical" evidence="2">
    <location>
        <begin position="390"/>
        <end position="410"/>
    </location>
</feature>
<feature type="topological domain" description="Cytoplasmic" evidence="1">
    <location>
        <begin position="411"/>
        <end position="431"/>
    </location>
</feature>
<organism>
    <name type="scientific">Bacillus subtilis (strain 168)</name>
    <dbReference type="NCBI Taxonomy" id="224308"/>
    <lineage>
        <taxon>Bacteria</taxon>
        <taxon>Bacillati</taxon>
        <taxon>Bacillota</taxon>
        <taxon>Bacilli</taxon>
        <taxon>Bacillales</taxon>
        <taxon>Bacillaceae</taxon>
        <taxon>Bacillus</taxon>
    </lineage>
</organism>
<proteinExistence type="evidence at protein level"/>